<evidence type="ECO:0000255" key="1">
    <source>
        <dbReference type="HAMAP-Rule" id="MF_00031"/>
    </source>
</evidence>
<accession>Q5L9Q7</accession>
<protein>
    <recommendedName>
        <fullName evidence="1">Holliday junction branch migration complex subunit RuvA</fullName>
    </recommendedName>
</protein>
<comment type="function">
    <text evidence="1">The RuvA-RuvB-RuvC complex processes Holliday junction (HJ) DNA during genetic recombination and DNA repair, while the RuvA-RuvB complex plays an important role in the rescue of blocked DNA replication forks via replication fork reversal (RFR). RuvA specifically binds to HJ cruciform DNA, conferring on it an open structure. The RuvB hexamer acts as an ATP-dependent pump, pulling dsDNA into and through the RuvAB complex. HJ branch migration allows RuvC to scan DNA until it finds its consensus sequence, where it cleaves and resolves the cruciform DNA.</text>
</comment>
<comment type="subunit">
    <text evidence="1">Homotetramer. Forms an RuvA(8)-RuvB(12)-Holliday junction (HJ) complex. HJ DNA is sandwiched between 2 RuvA tetramers; dsDNA enters through RuvA and exits via RuvB. An RuvB hexamer assembles on each DNA strand where it exits the tetramer. Each RuvB hexamer is contacted by two RuvA subunits (via domain III) on 2 adjacent RuvB subunits; this complex drives branch migration. In the full resolvosome a probable DNA-RuvA(4)-RuvB(12)-RuvC(2) complex forms which resolves the HJ.</text>
</comment>
<comment type="subcellular location">
    <subcellularLocation>
        <location evidence="1">Cytoplasm</location>
    </subcellularLocation>
</comment>
<comment type="domain">
    <text evidence="1">Has three domains with a flexible linker between the domains II and III and assumes an 'L' shape. Domain III is highly mobile and contacts RuvB.</text>
</comment>
<comment type="similarity">
    <text evidence="1">Belongs to the RuvA family.</text>
</comment>
<proteinExistence type="inferred from homology"/>
<sequence>MIEYIKGEIAELSPATAVIDCNGLGYAVNISLNTYSAIQGKSSCKLYIYEAIREDAYVLYGFADKQERELFLLLISVSGIGGNTARMILSALSPAELVNVISTENANMLKTVKGIGLKTAQRVIVDLKDKIKTGAMAATAVGGAAGALLPAMNAEVQEEAIAALTMLGFAAAPSQKAVLAILKEEPDAPVEKVIKLALKRL</sequence>
<keyword id="KW-0963">Cytoplasm</keyword>
<keyword id="KW-0227">DNA damage</keyword>
<keyword id="KW-0233">DNA recombination</keyword>
<keyword id="KW-0234">DNA repair</keyword>
<keyword id="KW-0238">DNA-binding</keyword>
<organism>
    <name type="scientific">Bacteroides fragilis (strain ATCC 25285 / DSM 2151 / CCUG 4856 / JCM 11019 / LMG 10263 / NCTC 9343 / Onslow / VPI 2553 / EN-2)</name>
    <dbReference type="NCBI Taxonomy" id="272559"/>
    <lineage>
        <taxon>Bacteria</taxon>
        <taxon>Pseudomonadati</taxon>
        <taxon>Bacteroidota</taxon>
        <taxon>Bacteroidia</taxon>
        <taxon>Bacteroidales</taxon>
        <taxon>Bacteroidaceae</taxon>
        <taxon>Bacteroides</taxon>
    </lineage>
</organism>
<feature type="chain" id="PRO_0000224843" description="Holliday junction branch migration complex subunit RuvA">
    <location>
        <begin position="1"/>
        <end position="201"/>
    </location>
</feature>
<feature type="region of interest" description="Domain I" evidence="1">
    <location>
        <begin position="1"/>
        <end position="63"/>
    </location>
</feature>
<feature type="region of interest" description="Domain II" evidence="1">
    <location>
        <begin position="64"/>
        <end position="142"/>
    </location>
</feature>
<feature type="region of interest" description="Flexible linker" evidence="1">
    <location>
        <begin position="143"/>
        <end position="153"/>
    </location>
</feature>
<feature type="region of interest" description="Domain III" evidence="1">
    <location>
        <begin position="153"/>
        <end position="201"/>
    </location>
</feature>
<gene>
    <name evidence="1" type="primary">ruvA</name>
    <name type="ordered locus">BF3480</name>
</gene>
<dbReference type="EMBL" id="CR626927">
    <property type="protein sequence ID" value="CAH09170.1"/>
    <property type="molecule type" value="Genomic_DNA"/>
</dbReference>
<dbReference type="RefSeq" id="WP_005790555.1">
    <property type="nucleotide sequence ID" value="NZ_UFTH01000001.1"/>
</dbReference>
<dbReference type="SMR" id="Q5L9Q7"/>
<dbReference type="PaxDb" id="272559-BF9343_3389"/>
<dbReference type="GeneID" id="60368711"/>
<dbReference type="KEGG" id="bfs:BF9343_3389"/>
<dbReference type="eggNOG" id="COG0632">
    <property type="taxonomic scope" value="Bacteria"/>
</dbReference>
<dbReference type="HOGENOM" id="CLU_087936_3_0_10"/>
<dbReference type="Proteomes" id="UP000006731">
    <property type="component" value="Chromosome"/>
</dbReference>
<dbReference type="GO" id="GO:0005737">
    <property type="term" value="C:cytoplasm"/>
    <property type="evidence" value="ECO:0007669"/>
    <property type="project" value="UniProtKB-SubCell"/>
</dbReference>
<dbReference type="GO" id="GO:0009379">
    <property type="term" value="C:Holliday junction helicase complex"/>
    <property type="evidence" value="ECO:0007669"/>
    <property type="project" value="InterPro"/>
</dbReference>
<dbReference type="GO" id="GO:0048476">
    <property type="term" value="C:Holliday junction resolvase complex"/>
    <property type="evidence" value="ECO:0007669"/>
    <property type="project" value="UniProtKB-UniRule"/>
</dbReference>
<dbReference type="GO" id="GO:0005524">
    <property type="term" value="F:ATP binding"/>
    <property type="evidence" value="ECO:0007669"/>
    <property type="project" value="InterPro"/>
</dbReference>
<dbReference type="GO" id="GO:0000400">
    <property type="term" value="F:four-way junction DNA binding"/>
    <property type="evidence" value="ECO:0007669"/>
    <property type="project" value="UniProtKB-UniRule"/>
</dbReference>
<dbReference type="GO" id="GO:0009378">
    <property type="term" value="F:four-way junction helicase activity"/>
    <property type="evidence" value="ECO:0007669"/>
    <property type="project" value="InterPro"/>
</dbReference>
<dbReference type="GO" id="GO:0006310">
    <property type="term" value="P:DNA recombination"/>
    <property type="evidence" value="ECO:0007669"/>
    <property type="project" value="UniProtKB-UniRule"/>
</dbReference>
<dbReference type="GO" id="GO:0006281">
    <property type="term" value="P:DNA repair"/>
    <property type="evidence" value="ECO:0007669"/>
    <property type="project" value="UniProtKB-UniRule"/>
</dbReference>
<dbReference type="CDD" id="cd14332">
    <property type="entry name" value="UBA_RuvA_C"/>
    <property type="match status" value="1"/>
</dbReference>
<dbReference type="Gene3D" id="1.10.150.20">
    <property type="entry name" value="5' to 3' exonuclease, C-terminal subdomain"/>
    <property type="match status" value="1"/>
</dbReference>
<dbReference type="Gene3D" id="1.10.8.10">
    <property type="entry name" value="DNA helicase RuvA subunit, C-terminal domain"/>
    <property type="match status" value="1"/>
</dbReference>
<dbReference type="Gene3D" id="2.40.50.140">
    <property type="entry name" value="Nucleic acid-binding proteins"/>
    <property type="match status" value="1"/>
</dbReference>
<dbReference type="HAMAP" id="MF_00031">
    <property type="entry name" value="DNA_HJ_migration_RuvA"/>
    <property type="match status" value="1"/>
</dbReference>
<dbReference type="InterPro" id="IPR013849">
    <property type="entry name" value="DNA_helicase_Holl-junc_RuvA_I"/>
</dbReference>
<dbReference type="InterPro" id="IPR003583">
    <property type="entry name" value="Hlx-hairpin-Hlx_DNA-bd_motif"/>
</dbReference>
<dbReference type="InterPro" id="IPR012340">
    <property type="entry name" value="NA-bd_OB-fold"/>
</dbReference>
<dbReference type="InterPro" id="IPR000085">
    <property type="entry name" value="RuvA"/>
</dbReference>
<dbReference type="InterPro" id="IPR010994">
    <property type="entry name" value="RuvA_2-like"/>
</dbReference>
<dbReference type="InterPro" id="IPR011114">
    <property type="entry name" value="RuvA_C"/>
</dbReference>
<dbReference type="InterPro" id="IPR036267">
    <property type="entry name" value="RuvA_C_sf"/>
</dbReference>
<dbReference type="NCBIfam" id="TIGR00084">
    <property type="entry name" value="ruvA"/>
    <property type="match status" value="1"/>
</dbReference>
<dbReference type="Pfam" id="PF14520">
    <property type="entry name" value="HHH_5"/>
    <property type="match status" value="1"/>
</dbReference>
<dbReference type="Pfam" id="PF07499">
    <property type="entry name" value="RuvA_C"/>
    <property type="match status" value="1"/>
</dbReference>
<dbReference type="Pfam" id="PF01330">
    <property type="entry name" value="RuvA_N"/>
    <property type="match status" value="1"/>
</dbReference>
<dbReference type="SMART" id="SM00278">
    <property type="entry name" value="HhH1"/>
    <property type="match status" value="2"/>
</dbReference>
<dbReference type="SUPFAM" id="SSF46929">
    <property type="entry name" value="DNA helicase RuvA subunit, C-terminal domain"/>
    <property type="match status" value="1"/>
</dbReference>
<dbReference type="SUPFAM" id="SSF50249">
    <property type="entry name" value="Nucleic acid-binding proteins"/>
    <property type="match status" value="1"/>
</dbReference>
<dbReference type="SUPFAM" id="SSF47781">
    <property type="entry name" value="RuvA domain 2-like"/>
    <property type="match status" value="1"/>
</dbReference>
<name>RUVA_BACFN</name>
<reference key="1">
    <citation type="journal article" date="2005" name="Science">
        <title>Extensive DNA inversions in the B. fragilis genome control variable gene expression.</title>
        <authorList>
            <person name="Cerdeno-Tarraga A.-M."/>
            <person name="Patrick S."/>
            <person name="Crossman L.C."/>
            <person name="Blakely G."/>
            <person name="Abratt V."/>
            <person name="Lennard N."/>
            <person name="Poxton I."/>
            <person name="Duerden B."/>
            <person name="Harris B."/>
            <person name="Quail M.A."/>
            <person name="Barron A."/>
            <person name="Clark L."/>
            <person name="Corton C."/>
            <person name="Doggett J."/>
            <person name="Holden M.T.G."/>
            <person name="Larke N."/>
            <person name="Line A."/>
            <person name="Lord A."/>
            <person name="Norbertczak H."/>
            <person name="Ormond D."/>
            <person name="Price C."/>
            <person name="Rabbinowitsch E."/>
            <person name="Woodward J."/>
            <person name="Barrell B.G."/>
            <person name="Parkhill J."/>
        </authorList>
    </citation>
    <scope>NUCLEOTIDE SEQUENCE [LARGE SCALE GENOMIC DNA]</scope>
    <source>
        <strain>ATCC 25285 / DSM 2151 / CCUG 4856 / JCM 11019 / LMG 10263 / NCTC 9343 / Onslow / VPI 2553 / EN-2</strain>
    </source>
</reference>